<gene>
    <name evidence="1" type="primary">lepA</name>
    <name type="ordered locus">Noc_2461</name>
</gene>
<keyword id="KW-0997">Cell inner membrane</keyword>
<keyword id="KW-1003">Cell membrane</keyword>
<keyword id="KW-0342">GTP-binding</keyword>
<keyword id="KW-0378">Hydrolase</keyword>
<keyword id="KW-0472">Membrane</keyword>
<keyword id="KW-0547">Nucleotide-binding</keyword>
<keyword id="KW-0648">Protein biosynthesis</keyword>
<keyword id="KW-1185">Reference proteome</keyword>
<organism>
    <name type="scientific">Nitrosococcus oceani (strain ATCC 19707 / BCRC 17464 / JCM 30415 / NCIMB 11848 / C-107)</name>
    <dbReference type="NCBI Taxonomy" id="323261"/>
    <lineage>
        <taxon>Bacteria</taxon>
        <taxon>Pseudomonadati</taxon>
        <taxon>Pseudomonadota</taxon>
        <taxon>Gammaproteobacteria</taxon>
        <taxon>Chromatiales</taxon>
        <taxon>Chromatiaceae</taxon>
        <taxon>Nitrosococcus</taxon>
    </lineage>
</organism>
<feature type="chain" id="PRO_0000224779" description="Elongation factor 4">
    <location>
        <begin position="1"/>
        <end position="606"/>
    </location>
</feature>
<feature type="domain" description="tr-type G">
    <location>
        <begin position="10"/>
        <end position="192"/>
    </location>
</feature>
<feature type="binding site" evidence="1">
    <location>
        <begin position="22"/>
        <end position="27"/>
    </location>
    <ligand>
        <name>GTP</name>
        <dbReference type="ChEBI" id="CHEBI:37565"/>
    </ligand>
</feature>
<feature type="binding site" evidence="1">
    <location>
        <begin position="139"/>
        <end position="142"/>
    </location>
    <ligand>
        <name>GTP</name>
        <dbReference type="ChEBI" id="CHEBI:37565"/>
    </ligand>
</feature>
<accession>Q3J8D2</accession>
<sequence>MGLSISHSMKNIRNFSIIAHIDHGKSTIADRFIQICGGLSKREMAQQVLDSMDLERERGITIKAQSVSLNYCGRNGEVYHLNFIDTPGHVDFSYEVSRSLAACEGALLVVDASQGVEAQSVANCYTAIEQGLEVVPVLNKIDLPSAEPERVCQEIEEIIGLDASDALQVSAKTGQGIEELLAALVARVPPPQGDPASPLRALIIDSWFDNYLGVISLVRVVDGCLKPKDKIKIMSTGQHYRVEKAGLFTPKRREVEQLLTGGVGYIIAGIKDVDGAPVGDTVTHVEQFATKALPGFKAVKPQVFAGLFPVDSDDYEDLREALAKLRLNDAALFYEPETSQALGFGFRCGFLGMLHMEIIQERLEREYSLNLITTAPTVVYQVLTSKGEVLRIDNPSILPEPGQVAEVREPIIQADILVPQQYVGAVIGLCEEKRGTQKQLQYLGNQISLNYELPLSEVVLDFFERLKSVSRGYASLDYHFSRFQSADLVKLDLLINGERVDALSLIVHRNQAHYRGRELAEKMRELIPRQLFDVAIQAAIGAHIVARTTVKALRKNVTAKCYGGDITRKRKLLEKQKAGKKRMKQVGSVEIPQEAFLAVLKVGKKP</sequence>
<reference key="1">
    <citation type="journal article" date="2006" name="Appl. Environ. Microbiol.">
        <title>Complete genome sequence of the marine, chemolithoautotrophic, ammonia-oxidizing bacterium Nitrosococcus oceani ATCC 19707.</title>
        <authorList>
            <person name="Klotz M.G."/>
            <person name="Arp D.J."/>
            <person name="Chain P.S.G."/>
            <person name="El-Sheikh A.F."/>
            <person name="Hauser L.J."/>
            <person name="Hommes N.G."/>
            <person name="Larimer F.W."/>
            <person name="Malfatti S.A."/>
            <person name="Norton J.M."/>
            <person name="Poret-Peterson A.T."/>
            <person name="Vergez L.M."/>
            <person name="Ward B.B."/>
        </authorList>
    </citation>
    <scope>NUCLEOTIDE SEQUENCE [LARGE SCALE GENOMIC DNA]</scope>
    <source>
        <strain>ATCC 19707 / BCRC 17464 / JCM 30415 / NCIMB 11848 / C-107</strain>
    </source>
</reference>
<protein>
    <recommendedName>
        <fullName evidence="1">Elongation factor 4</fullName>
        <shortName evidence="1">EF-4</shortName>
        <ecNumber evidence="1">3.6.5.n1</ecNumber>
    </recommendedName>
    <alternativeName>
        <fullName evidence="1">Ribosomal back-translocase LepA</fullName>
    </alternativeName>
</protein>
<comment type="function">
    <text evidence="1">Required for accurate and efficient protein synthesis under certain stress conditions. May act as a fidelity factor of the translation reaction, by catalyzing a one-codon backward translocation of tRNAs on improperly translocated ribosomes. Back-translocation proceeds from a post-translocation (POST) complex to a pre-translocation (PRE) complex, thus giving elongation factor G a second chance to translocate the tRNAs correctly. Binds to ribosomes in a GTP-dependent manner.</text>
</comment>
<comment type="catalytic activity">
    <reaction evidence="1">
        <text>GTP + H2O = GDP + phosphate + H(+)</text>
        <dbReference type="Rhea" id="RHEA:19669"/>
        <dbReference type="ChEBI" id="CHEBI:15377"/>
        <dbReference type="ChEBI" id="CHEBI:15378"/>
        <dbReference type="ChEBI" id="CHEBI:37565"/>
        <dbReference type="ChEBI" id="CHEBI:43474"/>
        <dbReference type="ChEBI" id="CHEBI:58189"/>
        <dbReference type="EC" id="3.6.5.n1"/>
    </reaction>
</comment>
<comment type="subcellular location">
    <subcellularLocation>
        <location evidence="1">Cell inner membrane</location>
        <topology evidence="1">Peripheral membrane protein</topology>
        <orientation evidence="1">Cytoplasmic side</orientation>
    </subcellularLocation>
</comment>
<comment type="similarity">
    <text evidence="1">Belongs to the TRAFAC class translation factor GTPase superfamily. Classic translation factor GTPase family. LepA subfamily.</text>
</comment>
<proteinExistence type="inferred from homology"/>
<dbReference type="EC" id="3.6.5.n1" evidence="1"/>
<dbReference type="EMBL" id="CP000127">
    <property type="protein sequence ID" value="ABA58914.1"/>
    <property type="molecule type" value="Genomic_DNA"/>
</dbReference>
<dbReference type="SMR" id="Q3J8D2"/>
<dbReference type="FunCoup" id="Q3J8D2">
    <property type="interactions" value="577"/>
</dbReference>
<dbReference type="STRING" id="323261.Noc_2461"/>
<dbReference type="KEGG" id="noc:Noc_2461"/>
<dbReference type="eggNOG" id="COG0481">
    <property type="taxonomic scope" value="Bacteria"/>
</dbReference>
<dbReference type="HOGENOM" id="CLU_009995_3_3_6"/>
<dbReference type="InParanoid" id="Q3J8D2"/>
<dbReference type="Proteomes" id="UP000006838">
    <property type="component" value="Chromosome"/>
</dbReference>
<dbReference type="GO" id="GO:0005886">
    <property type="term" value="C:plasma membrane"/>
    <property type="evidence" value="ECO:0007669"/>
    <property type="project" value="UniProtKB-SubCell"/>
</dbReference>
<dbReference type="GO" id="GO:0005525">
    <property type="term" value="F:GTP binding"/>
    <property type="evidence" value="ECO:0007669"/>
    <property type="project" value="UniProtKB-UniRule"/>
</dbReference>
<dbReference type="GO" id="GO:0003924">
    <property type="term" value="F:GTPase activity"/>
    <property type="evidence" value="ECO:0007669"/>
    <property type="project" value="UniProtKB-UniRule"/>
</dbReference>
<dbReference type="GO" id="GO:0097216">
    <property type="term" value="F:guanosine tetraphosphate binding"/>
    <property type="evidence" value="ECO:0007669"/>
    <property type="project" value="UniProtKB-ARBA"/>
</dbReference>
<dbReference type="GO" id="GO:0043022">
    <property type="term" value="F:ribosome binding"/>
    <property type="evidence" value="ECO:0007669"/>
    <property type="project" value="UniProtKB-UniRule"/>
</dbReference>
<dbReference type="GO" id="GO:0003746">
    <property type="term" value="F:translation elongation factor activity"/>
    <property type="evidence" value="ECO:0007669"/>
    <property type="project" value="UniProtKB-UniRule"/>
</dbReference>
<dbReference type="GO" id="GO:0045727">
    <property type="term" value="P:positive regulation of translation"/>
    <property type="evidence" value="ECO:0007669"/>
    <property type="project" value="UniProtKB-UniRule"/>
</dbReference>
<dbReference type="CDD" id="cd03699">
    <property type="entry name" value="EF4_II"/>
    <property type="match status" value="1"/>
</dbReference>
<dbReference type="CDD" id="cd16260">
    <property type="entry name" value="EF4_III"/>
    <property type="match status" value="1"/>
</dbReference>
<dbReference type="CDD" id="cd01890">
    <property type="entry name" value="LepA"/>
    <property type="match status" value="1"/>
</dbReference>
<dbReference type="CDD" id="cd03709">
    <property type="entry name" value="lepA_C"/>
    <property type="match status" value="1"/>
</dbReference>
<dbReference type="FunFam" id="3.40.50.300:FF:000078">
    <property type="entry name" value="Elongation factor 4"/>
    <property type="match status" value="1"/>
</dbReference>
<dbReference type="FunFam" id="2.40.30.10:FF:000015">
    <property type="entry name" value="Translation factor GUF1, mitochondrial"/>
    <property type="match status" value="1"/>
</dbReference>
<dbReference type="FunFam" id="3.30.70.240:FF:000007">
    <property type="entry name" value="Translation factor GUF1, mitochondrial"/>
    <property type="match status" value="1"/>
</dbReference>
<dbReference type="FunFam" id="3.30.70.2570:FF:000001">
    <property type="entry name" value="Translation factor GUF1, mitochondrial"/>
    <property type="match status" value="1"/>
</dbReference>
<dbReference type="FunFam" id="3.30.70.870:FF:000004">
    <property type="entry name" value="Translation factor GUF1, mitochondrial"/>
    <property type="match status" value="1"/>
</dbReference>
<dbReference type="Gene3D" id="3.30.70.240">
    <property type="match status" value="1"/>
</dbReference>
<dbReference type="Gene3D" id="3.30.70.2570">
    <property type="entry name" value="Elongation factor 4, C-terminal domain"/>
    <property type="match status" value="1"/>
</dbReference>
<dbReference type="Gene3D" id="3.30.70.870">
    <property type="entry name" value="Elongation Factor G (Translational Gtpase), domain 3"/>
    <property type="match status" value="1"/>
</dbReference>
<dbReference type="Gene3D" id="3.40.50.300">
    <property type="entry name" value="P-loop containing nucleotide triphosphate hydrolases"/>
    <property type="match status" value="1"/>
</dbReference>
<dbReference type="Gene3D" id="2.40.30.10">
    <property type="entry name" value="Translation factors"/>
    <property type="match status" value="1"/>
</dbReference>
<dbReference type="HAMAP" id="MF_00071">
    <property type="entry name" value="LepA"/>
    <property type="match status" value="1"/>
</dbReference>
<dbReference type="InterPro" id="IPR006297">
    <property type="entry name" value="EF-4"/>
</dbReference>
<dbReference type="InterPro" id="IPR035647">
    <property type="entry name" value="EFG_III/V"/>
</dbReference>
<dbReference type="InterPro" id="IPR000640">
    <property type="entry name" value="EFG_V-like"/>
</dbReference>
<dbReference type="InterPro" id="IPR004161">
    <property type="entry name" value="EFTu-like_2"/>
</dbReference>
<dbReference type="InterPro" id="IPR031157">
    <property type="entry name" value="G_TR_CS"/>
</dbReference>
<dbReference type="InterPro" id="IPR038363">
    <property type="entry name" value="LepA_C_sf"/>
</dbReference>
<dbReference type="InterPro" id="IPR013842">
    <property type="entry name" value="LepA_CTD"/>
</dbReference>
<dbReference type="InterPro" id="IPR035654">
    <property type="entry name" value="LepA_IV"/>
</dbReference>
<dbReference type="InterPro" id="IPR027417">
    <property type="entry name" value="P-loop_NTPase"/>
</dbReference>
<dbReference type="InterPro" id="IPR005225">
    <property type="entry name" value="Small_GTP-bd"/>
</dbReference>
<dbReference type="InterPro" id="IPR000795">
    <property type="entry name" value="T_Tr_GTP-bd_dom"/>
</dbReference>
<dbReference type="InterPro" id="IPR009000">
    <property type="entry name" value="Transl_B-barrel_sf"/>
</dbReference>
<dbReference type="NCBIfam" id="TIGR01393">
    <property type="entry name" value="lepA"/>
    <property type="match status" value="1"/>
</dbReference>
<dbReference type="NCBIfam" id="TIGR00231">
    <property type="entry name" value="small_GTP"/>
    <property type="match status" value="1"/>
</dbReference>
<dbReference type="PANTHER" id="PTHR43512:SF4">
    <property type="entry name" value="TRANSLATION FACTOR GUF1 HOMOLOG, CHLOROPLASTIC"/>
    <property type="match status" value="1"/>
</dbReference>
<dbReference type="PANTHER" id="PTHR43512">
    <property type="entry name" value="TRANSLATION FACTOR GUF1-RELATED"/>
    <property type="match status" value="1"/>
</dbReference>
<dbReference type="Pfam" id="PF00679">
    <property type="entry name" value="EFG_C"/>
    <property type="match status" value="1"/>
</dbReference>
<dbReference type="Pfam" id="PF00009">
    <property type="entry name" value="GTP_EFTU"/>
    <property type="match status" value="1"/>
</dbReference>
<dbReference type="Pfam" id="PF03144">
    <property type="entry name" value="GTP_EFTU_D2"/>
    <property type="match status" value="1"/>
</dbReference>
<dbReference type="Pfam" id="PF06421">
    <property type="entry name" value="LepA_C"/>
    <property type="match status" value="1"/>
</dbReference>
<dbReference type="PRINTS" id="PR00315">
    <property type="entry name" value="ELONGATNFCT"/>
</dbReference>
<dbReference type="SUPFAM" id="SSF54980">
    <property type="entry name" value="EF-G C-terminal domain-like"/>
    <property type="match status" value="2"/>
</dbReference>
<dbReference type="SUPFAM" id="SSF52540">
    <property type="entry name" value="P-loop containing nucleoside triphosphate hydrolases"/>
    <property type="match status" value="1"/>
</dbReference>
<dbReference type="SUPFAM" id="SSF50447">
    <property type="entry name" value="Translation proteins"/>
    <property type="match status" value="1"/>
</dbReference>
<dbReference type="PROSITE" id="PS00301">
    <property type="entry name" value="G_TR_1"/>
    <property type="match status" value="1"/>
</dbReference>
<dbReference type="PROSITE" id="PS51722">
    <property type="entry name" value="G_TR_2"/>
    <property type="match status" value="1"/>
</dbReference>
<name>LEPA_NITOC</name>
<evidence type="ECO:0000255" key="1">
    <source>
        <dbReference type="HAMAP-Rule" id="MF_00071"/>
    </source>
</evidence>